<feature type="chain" id="PRO_0000282586" description="Probable imidazolonepropionase">
    <location>
        <begin position="1"/>
        <end position="432"/>
    </location>
</feature>
<feature type="binding site" evidence="3">
    <location>
        <position position="159"/>
    </location>
    <ligand>
        <name>4-imidazolone-5-propanoate</name>
        <dbReference type="ChEBI" id="CHEBI:77893"/>
    </ligand>
</feature>
<feature type="binding site" evidence="4">
    <location>
        <position position="159"/>
    </location>
    <ligand>
        <name>N-formimidoyl-L-glutamate</name>
        <dbReference type="ChEBI" id="CHEBI:58928"/>
    </ligand>
</feature>
<feature type="binding site" evidence="3">
    <location>
        <position position="192"/>
    </location>
    <ligand>
        <name>4-imidazolone-5-propanoate</name>
        <dbReference type="ChEBI" id="CHEBI:77893"/>
    </ligand>
</feature>
<feature type="binding site" evidence="2">
    <location>
        <position position="260"/>
    </location>
    <ligand>
        <name>Fe(3+)</name>
        <dbReference type="ChEBI" id="CHEBI:29034"/>
    </ligand>
</feature>
<feature type="binding site" evidence="3">
    <location>
        <position position="260"/>
    </location>
    <ligand>
        <name>Zn(2+)</name>
        <dbReference type="ChEBI" id="CHEBI:29105"/>
    </ligand>
</feature>
<feature type="binding site" evidence="3">
    <location>
        <position position="263"/>
    </location>
    <ligand>
        <name>4-imidazolone-5-propanoate</name>
        <dbReference type="ChEBI" id="CHEBI:77893"/>
    </ligand>
</feature>
<feature type="binding site" evidence="2">
    <location>
        <position position="334"/>
    </location>
    <ligand>
        <name>Fe(3+)</name>
        <dbReference type="ChEBI" id="CHEBI:29034"/>
    </ligand>
</feature>
<feature type="binding site" evidence="3">
    <location>
        <position position="334"/>
    </location>
    <ligand>
        <name>Zn(2+)</name>
        <dbReference type="ChEBI" id="CHEBI:29105"/>
    </ligand>
</feature>
<feature type="binding site" evidence="4">
    <location>
        <position position="336"/>
    </location>
    <ligand>
        <name>N-formimidoyl-L-glutamate</name>
        <dbReference type="ChEBI" id="CHEBI:58928"/>
    </ligand>
</feature>
<name>HUTI_XENTR</name>
<evidence type="ECO:0000250" key="1"/>
<evidence type="ECO:0000250" key="2">
    <source>
        <dbReference type="UniProtKB" id="A0KF84"/>
    </source>
</evidence>
<evidence type="ECO:0000250" key="3">
    <source>
        <dbReference type="UniProtKB" id="P42084"/>
    </source>
</evidence>
<evidence type="ECO:0000250" key="4">
    <source>
        <dbReference type="UniProtKB" id="Q8U8Z6"/>
    </source>
</evidence>
<evidence type="ECO:0000305" key="5"/>
<proteinExistence type="evidence at transcript level"/>
<sequence>MACKFRLLLENAEQIVVVCSKEEEYLLEDGMQHLAILEKASLVIGNDGFIKDVGPAETIRNQFSNASFENIIDCSGKCVLPGFVDAHTHPVWAGDRVHEFAMKLAGATYMDIHKAGGGINYTVEHTTTASEEELFCSFKHRLERMLRAGTTLVECKSGYGLKLETELKMLRVIERAHQELDIAVSSTYCGAHSVPKGKSAQEATDDIIANHLPALKQMALNGEIHVDNIDVFCEKGVFDLDSTRKILQAGKAIGLNLNFHGDELNPMNSAELGAELGAHAVSHLEEVSDKGIAALAKAKCSAVLLPTTAYILRLKQPRARDMLKAGVIVSLGSDFNPNAYCFSMPMVMHLACVNMKMSLKEALAAATINAAYALGRAHTHGSLEVGKQGDVVVINASRWEHVIYQFGGHQELIEYVVIKGKIVYKNENVLCL</sequence>
<keyword id="KW-0369">Histidine metabolism</keyword>
<keyword id="KW-0378">Hydrolase</keyword>
<keyword id="KW-0408">Iron</keyword>
<keyword id="KW-0479">Metal-binding</keyword>
<keyword id="KW-1185">Reference proteome</keyword>
<keyword id="KW-0862">Zinc</keyword>
<reference key="1">
    <citation type="submission" date="2004-08" db="EMBL/GenBank/DDBJ databases">
        <authorList>
            <consortium name="NIH - Xenopus Gene Collection (XGC) project"/>
        </authorList>
    </citation>
    <scope>NUCLEOTIDE SEQUENCE [LARGE SCALE MRNA]</scope>
    <source>
        <tissue>Embryo</tissue>
    </source>
</reference>
<gene>
    <name type="primary">amdhd1</name>
</gene>
<comment type="catalytic activity">
    <reaction>
        <text>4-imidazolone-5-propanoate + H2O = N-formimidoyl-L-glutamate</text>
        <dbReference type="Rhea" id="RHEA:23660"/>
        <dbReference type="ChEBI" id="CHEBI:15377"/>
        <dbReference type="ChEBI" id="CHEBI:58928"/>
        <dbReference type="ChEBI" id="CHEBI:77893"/>
        <dbReference type="EC" id="3.5.2.7"/>
    </reaction>
</comment>
<comment type="cofactor">
    <cofactor evidence="1">
        <name>Zn(2+)</name>
        <dbReference type="ChEBI" id="CHEBI:29105"/>
    </cofactor>
    <cofactor evidence="1">
        <name>Fe(3+)</name>
        <dbReference type="ChEBI" id="CHEBI:29034"/>
    </cofactor>
    <text evidence="1">Binds 1 zinc or iron ion per subunit.</text>
</comment>
<comment type="pathway">
    <text>Amino-acid degradation; L-histidine degradation into L-glutamate; N-formimidoyl-L-glutamate from L-histidine: step 3/3.</text>
</comment>
<comment type="similarity">
    <text evidence="5">Belongs to the metallo-dependent hydrolases superfamily. HutI family.</text>
</comment>
<organism>
    <name type="scientific">Xenopus tropicalis</name>
    <name type="common">Western clawed frog</name>
    <name type="synonym">Silurana tropicalis</name>
    <dbReference type="NCBI Taxonomy" id="8364"/>
    <lineage>
        <taxon>Eukaryota</taxon>
        <taxon>Metazoa</taxon>
        <taxon>Chordata</taxon>
        <taxon>Craniata</taxon>
        <taxon>Vertebrata</taxon>
        <taxon>Euteleostomi</taxon>
        <taxon>Amphibia</taxon>
        <taxon>Batrachia</taxon>
        <taxon>Anura</taxon>
        <taxon>Pipoidea</taxon>
        <taxon>Pipidae</taxon>
        <taxon>Xenopodinae</taxon>
        <taxon>Xenopus</taxon>
        <taxon>Silurana</taxon>
    </lineage>
</organism>
<protein>
    <recommendedName>
        <fullName>Probable imidazolonepropionase</fullName>
        <ecNumber>3.5.2.7</ecNumber>
    </recommendedName>
    <alternativeName>
        <fullName>Amidohydrolase domain-containing protein 1</fullName>
    </alternativeName>
</protein>
<accession>Q68EP2</accession>
<dbReference type="EC" id="3.5.2.7"/>
<dbReference type="EMBL" id="BC080159">
    <property type="protein sequence ID" value="AAH80159.1"/>
    <property type="molecule type" value="mRNA"/>
</dbReference>
<dbReference type="RefSeq" id="NP_001007888.1">
    <property type="nucleotide sequence ID" value="NM_001007887.1"/>
</dbReference>
<dbReference type="RefSeq" id="XP_012814327.1">
    <property type="nucleotide sequence ID" value="XM_012958873.3"/>
</dbReference>
<dbReference type="RefSeq" id="XP_017947532.1">
    <property type="nucleotide sequence ID" value="XM_018092043.2"/>
</dbReference>
<dbReference type="SMR" id="Q68EP2"/>
<dbReference type="FunCoup" id="Q68EP2">
    <property type="interactions" value="400"/>
</dbReference>
<dbReference type="STRING" id="8364.ENSXETP00000037320"/>
<dbReference type="MEROPS" id="M38.980"/>
<dbReference type="PaxDb" id="8364-ENSXETP00000046755"/>
<dbReference type="GeneID" id="493273"/>
<dbReference type="KEGG" id="xtr:493273"/>
<dbReference type="AGR" id="Xenbase:XB-GENE-5845038"/>
<dbReference type="CTD" id="144193"/>
<dbReference type="Xenbase" id="XB-GENE-5845038">
    <property type="gene designation" value="amdhd1"/>
</dbReference>
<dbReference type="eggNOG" id="KOG3968">
    <property type="taxonomic scope" value="Eukaryota"/>
</dbReference>
<dbReference type="HOGENOM" id="CLU_041647_2_0_1"/>
<dbReference type="InParanoid" id="Q68EP2"/>
<dbReference type="OMA" id="CAPHARW"/>
<dbReference type="OrthoDB" id="194468at2759"/>
<dbReference type="Reactome" id="R-XTR-70921">
    <property type="pathway name" value="Histidine catabolism"/>
</dbReference>
<dbReference type="UniPathway" id="UPA00379">
    <property type="reaction ID" value="UER00551"/>
</dbReference>
<dbReference type="Proteomes" id="UP000008143">
    <property type="component" value="Chromosome 3"/>
</dbReference>
<dbReference type="Bgee" id="ENSXETG00000021636">
    <property type="expression patterns" value="Expressed in mesonephros and 13 other cell types or tissues"/>
</dbReference>
<dbReference type="GO" id="GO:0005737">
    <property type="term" value="C:cytoplasm"/>
    <property type="evidence" value="ECO:0007669"/>
    <property type="project" value="InterPro"/>
</dbReference>
<dbReference type="GO" id="GO:0050480">
    <property type="term" value="F:imidazolonepropionase activity"/>
    <property type="evidence" value="ECO:0007669"/>
    <property type="project" value="UniProtKB-EC"/>
</dbReference>
<dbReference type="GO" id="GO:0046872">
    <property type="term" value="F:metal ion binding"/>
    <property type="evidence" value="ECO:0007669"/>
    <property type="project" value="UniProtKB-KW"/>
</dbReference>
<dbReference type="GO" id="GO:0019556">
    <property type="term" value="P:L-histidine catabolic process to glutamate and formamide"/>
    <property type="evidence" value="ECO:0007669"/>
    <property type="project" value="UniProtKB-UniPathway"/>
</dbReference>
<dbReference type="GO" id="GO:0019557">
    <property type="term" value="P:L-histidine catabolic process to glutamate and formate"/>
    <property type="evidence" value="ECO:0007669"/>
    <property type="project" value="UniProtKB-UniPathway"/>
</dbReference>
<dbReference type="CDD" id="cd01296">
    <property type="entry name" value="Imidazolone-5PH"/>
    <property type="match status" value="1"/>
</dbReference>
<dbReference type="FunFam" id="3.20.20.140:FF:000007">
    <property type="entry name" value="Imidazolonepropionase"/>
    <property type="match status" value="1"/>
</dbReference>
<dbReference type="Gene3D" id="3.20.20.140">
    <property type="entry name" value="Metal-dependent hydrolases"/>
    <property type="match status" value="1"/>
</dbReference>
<dbReference type="Gene3D" id="2.30.40.10">
    <property type="entry name" value="Urease, subunit C, domain 1"/>
    <property type="match status" value="1"/>
</dbReference>
<dbReference type="InterPro" id="IPR006680">
    <property type="entry name" value="Amidohydro-rel"/>
</dbReference>
<dbReference type="InterPro" id="IPR005920">
    <property type="entry name" value="HutI"/>
</dbReference>
<dbReference type="InterPro" id="IPR011059">
    <property type="entry name" value="Metal-dep_hydrolase_composite"/>
</dbReference>
<dbReference type="InterPro" id="IPR032466">
    <property type="entry name" value="Metal_Hydrolase"/>
</dbReference>
<dbReference type="NCBIfam" id="TIGR01224">
    <property type="entry name" value="hutI"/>
    <property type="match status" value="1"/>
</dbReference>
<dbReference type="PANTHER" id="PTHR42752">
    <property type="entry name" value="IMIDAZOLONEPROPIONASE"/>
    <property type="match status" value="1"/>
</dbReference>
<dbReference type="PANTHER" id="PTHR42752:SF1">
    <property type="entry name" value="IMIDAZOLONEPROPIONASE-RELATED"/>
    <property type="match status" value="1"/>
</dbReference>
<dbReference type="Pfam" id="PF01979">
    <property type="entry name" value="Amidohydro_1"/>
    <property type="match status" value="1"/>
</dbReference>
<dbReference type="SUPFAM" id="SSF51338">
    <property type="entry name" value="Composite domain of metallo-dependent hydrolases"/>
    <property type="match status" value="1"/>
</dbReference>
<dbReference type="SUPFAM" id="SSF51556">
    <property type="entry name" value="Metallo-dependent hydrolases"/>
    <property type="match status" value="1"/>
</dbReference>